<keyword id="KW-0997">Cell inner membrane</keyword>
<keyword id="KW-1003">Cell membrane</keyword>
<keyword id="KW-0472">Membrane</keyword>
<keyword id="KW-0812">Transmembrane</keyword>
<keyword id="KW-1133">Transmembrane helix</keyword>
<keyword id="KW-0813">Transport</keyword>
<reference key="1">
    <citation type="journal article" date="2002" name="Proc. Natl. Acad. Sci. U.S.A.">
        <title>The Brucella suis genome reveals fundamental similarities between animal and plant pathogens and symbionts.</title>
        <authorList>
            <person name="Paulsen I.T."/>
            <person name="Seshadri R."/>
            <person name="Nelson K.E."/>
            <person name="Eisen J.A."/>
            <person name="Heidelberg J.F."/>
            <person name="Read T.D."/>
            <person name="Dodson R.J."/>
            <person name="Umayam L.A."/>
            <person name="Brinkac L.M."/>
            <person name="Beanan M.J."/>
            <person name="Daugherty S.C."/>
            <person name="DeBoy R.T."/>
            <person name="Durkin A.S."/>
            <person name="Kolonay J.F."/>
            <person name="Madupu R."/>
            <person name="Nelson W.C."/>
            <person name="Ayodeji B."/>
            <person name="Kraul M."/>
            <person name="Shetty J."/>
            <person name="Malek J.A."/>
            <person name="Van Aken S.E."/>
            <person name="Riedmuller S."/>
            <person name="Tettelin H."/>
            <person name="Gill S.R."/>
            <person name="White O."/>
            <person name="Salzberg S.L."/>
            <person name="Hoover D.L."/>
            <person name="Lindler L.E."/>
            <person name="Halling S.M."/>
            <person name="Boyle S.M."/>
            <person name="Fraser C.M."/>
        </authorList>
    </citation>
    <scope>NUCLEOTIDE SEQUENCE [LARGE SCALE GENOMIC DNA]</scope>
    <source>
        <strain>1330</strain>
    </source>
</reference>
<reference key="2">
    <citation type="journal article" date="2011" name="J. Bacteriol.">
        <title>Revised genome sequence of Brucella suis 1330.</title>
        <authorList>
            <person name="Tae H."/>
            <person name="Shallom S."/>
            <person name="Settlage R."/>
            <person name="Preston D."/>
            <person name="Adams L.G."/>
            <person name="Garner H.R."/>
        </authorList>
    </citation>
    <scope>NUCLEOTIDE SEQUENCE [LARGE SCALE GENOMIC DNA]</scope>
    <source>
        <strain>1330</strain>
    </source>
</reference>
<evidence type="ECO:0000250" key="1"/>
<evidence type="ECO:0000255" key="2">
    <source>
        <dbReference type="PROSITE-ProRule" id="PRU00441"/>
    </source>
</evidence>
<evidence type="ECO:0000305" key="3"/>
<sequence length="296" mass="32007">MTELASPTSFSMPDIGKSPVVLTARRLMRRRSFRIGLVLLLIVVLAAVLAPWITNGKPNATSVRMRFQPPGLEHLFGTDNFGRDLWTRVLYGAQVSLWIGLTVAVLSAILGAIIGIAAAWYRRFDTLLMRVMDALMAFPAILLAIGISAALGPHLSSVIIALTSAYIPRCARIVRASALVLRETDYVDAARLAGASDLRIITRHILPNCLAPLLVTLTFVFAYAILAEATLSFLGIGTPPPHASWGSIVAQGRDYSVDAWWIMLFPGIAITISALAINLIGDGLRDVLDPRLKVEG</sequence>
<protein>
    <recommendedName>
        <fullName>Putative peptide transport system permease protein BRA1093/BS1330_II1085</fullName>
    </recommendedName>
</protein>
<proteinExistence type="inferred from homology"/>
<dbReference type="EMBL" id="AE014292">
    <property type="protein sequence ID" value="AAN34258.1"/>
    <property type="molecule type" value="Genomic_DNA"/>
</dbReference>
<dbReference type="EMBL" id="CP002998">
    <property type="protein sequence ID" value="AEM20535.1"/>
    <property type="molecule type" value="Genomic_DNA"/>
</dbReference>
<dbReference type="RefSeq" id="WP_006192296.1">
    <property type="nucleotide sequence ID" value="NZ_KN046805.1"/>
</dbReference>
<dbReference type="SMR" id="Q8FUW9"/>
<dbReference type="GeneID" id="45054074"/>
<dbReference type="KEGG" id="bms:BRA1093"/>
<dbReference type="KEGG" id="bsi:BS1330_II1085"/>
<dbReference type="PATRIC" id="fig|204722.22.peg.2682"/>
<dbReference type="HOGENOM" id="CLU_028518_1_1_5"/>
<dbReference type="PhylomeDB" id="Q8FUW9"/>
<dbReference type="Proteomes" id="UP000007104">
    <property type="component" value="Chromosome II"/>
</dbReference>
<dbReference type="GO" id="GO:0005886">
    <property type="term" value="C:plasma membrane"/>
    <property type="evidence" value="ECO:0007669"/>
    <property type="project" value="UniProtKB-SubCell"/>
</dbReference>
<dbReference type="GO" id="GO:0055085">
    <property type="term" value="P:transmembrane transport"/>
    <property type="evidence" value="ECO:0007669"/>
    <property type="project" value="InterPro"/>
</dbReference>
<dbReference type="CDD" id="cd06261">
    <property type="entry name" value="TM_PBP2"/>
    <property type="match status" value="1"/>
</dbReference>
<dbReference type="Gene3D" id="1.10.3720.10">
    <property type="entry name" value="MetI-like"/>
    <property type="match status" value="1"/>
</dbReference>
<dbReference type="InterPro" id="IPR050366">
    <property type="entry name" value="BP-dependent_transpt_permease"/>
</dbReference>
<dbReference type="InterPro" id="IPR000515">
    <property type="entry name" value="MetI-like"/>
</dbReference>
<dbReference type="InterPro" id="IPR035906">
    <property type="entry name" value="MetI-like_sf"/>
</dbReference>
<dbReference type="InterPro" id="IPR025966">
    <property type="entry name" value="OppC_N"/>
</dbReference>
<dbReference type="PANTHER" id="PTHR43386">
    <property type="entry name" value="OLIGOPEPTIDE TRANSPORT SYSTEM PERMEASE PROTEIN APPC"/>
    <property type="match status" value="1"/>
</dbReference>
<dbReference type="PANTHER" id="PTHR43386:SF25">
    <property type="entry name" value="PEPTIDE ABC TRANSPORTER PERMEASE PROTEIN"/>
    <property type="match status" value="1"/>
</dbReference>
<dbReference type="Pfam" id="PF00528">
    <property type="entry name" value="BPD_transp_1"/>
    <property type="match status" value="1"/>
</dbReference>
<dbReference type="Pfam" id="PF12911">
    <property type="entry name" value="OppC_N"/>
    <property type="match status" value="1"/>
</dbReference>
<dbReference type="SUPFAM" id="SSF161098">
    <property type="entry name" value="MetI-like"/>
    <property type="match status" value="1"/>
</dbReference>
<dbReference type="PROSITE" id="PS50928">
    <property type="entry name" value="ABC_TM1"/>
    <property type="match status" value="1"/>
</dbReference>
<feature type="chain" id="PRO_0000290153" description="Putative peptide transport system permease protein BRA1093/BS1330_II1085">
    <location>
        <begin position="1"/>
        <end position="296"/>
    </location>
</feature>
<feature type="transmembrane region" description="Helical" evidence="2">
    <location>
        <begin position="35"/>
        <end position="55"/>
    </location>
</feature>
<feature type="transmembrane region" description="Helical" evidence="2">
    <location>
        <begin position="97"/>
        <end position="117"/>
    </location>
</feature>
<feature type="transmembrane region" description="Helical" evidence="2">
    <location>
        <begin position="131"/>
        <end position="151"/>
    </location>
</feature>
<feature type="transmembrane region" description="Helical" evidence="2">
    <location>
        <begin position="205"/>
        <end position="225"/>
    </location>
</feature>
<feature type="transmembrane region" description="Helical" evidence="2">
    <location>
        <begin position="229"/>
        <end position="249"/>
    </location>
</feature>
<feature type="transmembrane region" description="Helical" evidence="2">
    <location>
        <begin position="260"/>
        <end position="280"/>
    </location>
</feature>
<feature type="domain" description="ABC transmembrane type-1" evidence="2">
    <location>
        <begin position="97"/>
        <end position="281"/>
    </location>
</feature>
<accession>Q8FUW9</accession>
<accession>G0KE97</accession>
<gene>
    <name type="ordered locus">BRA1093</name>
    <name type="ordered locus">BS1330_II1085</name>
</gene>
<name>Y1093_BRUSU</name>
<comment type="function">
    <text evidence="1">Probably part of an ABC transporter complex that could be involved in peptide import. Probably responsible for the translocation of the substrate across the membrane (By similarity).</text>
</comment>
<comment type="subunit">
    <text evidence="3">The complex is composed of two ATP-binding proteins (BRA1094), two transmembrane proteins (BRA1092 and BRA1093) and a solute-binding protein (BRA1090).</text>
</comment>
<comment type="subcellular location">
    <subcellularLocation>
        <location evidence="3">Cell inner membrane</location>
        <topology evidence="2">Multi-pass membrane protein</topology>
    </subcellularLocation>
</comment>
<comment type="similarity">
    <text evidence="3">Belongs to the binding-protein-dependent transport system permease family.</text>
</comment>
<organism>
    <name type="scientific">Brucella suis biovar 1 (strain 1330)</name>
    <dbReference type="NCBI Taxonomy" id="204722"/>
    <lineage>
        <taxon>Bacteria</taxon>
        <taxon>Pseudomonadati</taxon>
        <taxon>Pseudomonadota</taxon>
        <taxon>Alphaproteobacteria</taxon>
        <taxon>Hyphomicrobiales</taxon>
        <taxon>Brucellaceae</taxon>
        <taxon>Brucella/Ochrobactrum group</taxon>
        <taxon>Brucella</taxon>
    </lineage>
</organism>